<sequence length="132" mass="15116">MGQSFNAPYEAIGEELLSQLVDTFYERVASHPLLKPIFPSDLTETARKQKQFLTQYLGGPPLYTEEHGHPMLRARHLPFPITNERADAWLSCMKDAMDHVGLEGEIREFLFGRLELTARHMVNQTEAEDRSS</sequence>
<name>TRHBO_BACSU</name>
<evidence type="ECO:0000269" key="1">
    <source>
    </source>
</evidence>
<evidence type="ECO:0000305" key="2"/>
<evidence type="ECO:0007829" key="3">
    <source>
        <dbReference type="PDB" id="1UX8"/>
    </source>
</evidence>
<comment type="function">
    <text evidence="1">Hemoglobin-like protein that exhibits a low peroxidase activity. Its very high oxygen affinity may rule out the possibility that it is involved in oxygen transport.</text>
</comment>
<comment type="cofactor">
    <cofactor>
        <name>heme</name>
        <dbReference type="ChEBI" id="CHEBI:30413"/>
    </cofactor>
    <text>Binds 1 heme group per subunit.</text>
</comment>
<comment type="subunit">
    <text evidence="1">Monomer.</text>
</comment>
<comment type="similarity">
    <text evidence="2">Belongs to the truncated hemoglobin family. Group II subfamily.</text>
</comment>
<protein>
    <recommendedName>
        <fullName>Group 2 truncated hemoglobin YjbI</fullName>
        <shortName>Truncated Hb</shortName>
        <shortName>trHbO</shortName>
    </recommendedName>
    <alternativeName>
        <fullName>Hemoglobin-like protein YjbI</fullName>
    </alternativeName>
    <alternativeName>
        <fullName>Truncated BHb</fullName>
    </alternativeName>
</protein>
<keyword id="KW-0002">3D-structure</keyword>
<keyword id="KW-0349">Heme</keyword>
<keyword id="KW-0408">Iron</keyword>
<keyword id="KW-0479">Metal-binding</keyword>
<keyword id="KW-1185">Reference proteome</keyword>
<keyword id="KW-0813">Transport</keyword>
<dbReference type="EMBL" id="AL009126">
    <property type="protein sequence ID" value="CAB13013.1"/>
    <property type="molecule type" value="Genomic_DNA"/>
</dbReference>
<dbReference type="PIR" id="A69844">
    <property type="entry name" value="A69844"/>
</dbReference>
<dbReference type="RefSeq" id="NP_389038.1">
    <property type="nucleotide sequence ID" value="NC_000964.3"/>
</dbReference>
<dbReference type="RefSeq" id="WP_003232928.1">
    <property type="nucleotide sequence ID" value="NZ_OZ025638.1"/>
</dbReference>
<dbReference type="PDB" id="1UX8">
    <property type="method" value="X-ray"/>
    <property type="resolution" value="2.15 A"/>
    <property type="chains" value="A=1-132"/>
</dbReference>
<dbReference type="PDBsum" id="1UX8"/>
<dbReference type="SMR" id="O31607"/>
<dbReference type="FunCoup" id="O31607">
    <property type="interactions" value="26"/>
</dbReference>
<dbReference type="STRING" id="224308.BSU11560"/>
<dbReference type="PaxDb" id="224308-BSU11560"/>
<dbReference type="EnsemblBacteria" id="CAB13013">
    <property type="protein sequence ID" value="CAB13013"/>
    <property type="gene ID" value="BSU_11560"/>
</dbReference>
<dbReference type="GeneID" id="936416"/>
<dbReference type="KEGG" id="bsu:BSU11560"/>
<dbReference type="PATRIC" id="fig|224308.179.peg.1245"/>
<dbReference type="eggNOG" id="COG2346">
    <property type="taxonomic scope" value="Bacteria"/>
</dbReference>
<dbReference type="InParanoid" id="O31607"/>
<dbReference type="OrthoDB" id="9790913at2"/>
<dbReference type="PhylomeDB" id="O31607"/>
<dbReference type="BioCyc" id="BSUB:BSU11560-MONOMER"/>
<dbReference type="EvolutionaryTrace" id="O31607"/>
<dbReference type="Proteomes" id="UP000001570">
    <property type="component" value="Chromosome"/>
</dbReference>
<dbReference type="GO" id="GO:0020037">
    <property type="term" value="F:heme binding"/>
    <property type="evidence" value="ECO:0007669"/>
    <property type="project" value="InterPro"/>
</dbReference>
<dbReference type="GO" id="GO:0046872">
    <property type="term" value="F:metal ion binding"/>
    <property type="evidence" value="ECO:0007669"/>
    <property type="project" value="UniProtKB-KW"/>
</dbReference>
<dbReference type="GO" id="GO:0019825">
    <property type="term" value="F:oxygen binding"/>
    <property type="evidence" value="ECO:0007669"/>
    <property type="project" value="InterPro"/>
</dbReference>
<dbReference type="GO" id="GO:0005344">
    <property type="term" value="F:oxygen carrier activity"/>
    <property type="evidence" value="ECO:0007669"/>
    <property type="project" value="InterPro"/>
</dbReference>
<dbReference type="CDD" id="cd14772">
    <property type="entry name" value="TrHb2_Bs-trHb-like_O"/>
    <property type="match status" value="1"/>
</dbReference>
<dbReference type="FunFam" id="1.10.490.10:FF:000004">
    <property type="entry name" value="Group 2 hemoglobin yjbI"/>
    <property type="match status" value="1"/>
</dbReference>
<dbReference type="Gene3D" id="1.10.490.10">
    <property type="entry name" value="Globins"/>
    <property type="match status" value="1"/>
</dbReference>
<dbReference type="InterPro" id="IPR044203">
    <property type="entry name" value="GlbO/GLB3-like"/>
</dbReference>
<dbReference type="InterPro" id="IPR009050">
    <property type="entry name" value="Globin-like_sf"/>
</dbReference>
<dbReference type="InterPro" id="IPR012292">
    <property type="entry name" value="Globin/Proto"/>
</dbReference>
<dbReference type="InterPro" id="IPR019795">
    <property type="entry name" value="Globin_bac-like_CS"/>
</dbReference>
<dbReference type="InterPro" id="IPR001486">
    <property type="entry name" value="Hemoglobin_trunc"/>
</dbReference>
<dbReference type="PANTHER" id="PTHR47366">
    <property type="entry name" value="TWO-ON-TWO HEMOGLOBIN-3"/>
    <property type="match status" value="1"/>
</dbReference>
<dbReference type="PANTHER" id="PTHR47366:SF1">
    <property type="entry name" value="TWO-ON-TWO HEMOGLOBIN-3"/>
    <property type="match status" value="1"/>
</dbReference>
<dbReference type="Pfam" id="PF01152">
    <property type="entry name" value="Bac_globin"/>
    <property type="match status" value="1"/>
</dbReference>
<dbReference type="SUPFAM" id="SSF46458">
    <property type="entry name" value="Globin-like"/>
    <property type="match status" value="1"/>
</dbReference>
<dbReference type="PROSITE" id="PS01213">
    <property type="entry name" value="GLOBIN_FAM_2"/>
    <property type="match status" value="1"/>
</dbReference>
<proteinExistence type="evidence at protein level"/>
<gene>
    <name type="primary">yjbI</name>
    <name type="ordered locus">BSU11560</name>
</gene>
<reference key="1">
    <citation type="journal article" date="1997" name="Nature">
        <title>The complete genome sequence of the Gram-positive bacterium Bacillus subtilis.</title>
        <authorList>
            <person name="Kunst F."/>
            <person name="Ogasawara N."/>
            <person name="Moszer I."/>
            <person name="Albertini A.M."/>
            <person name="Alloni G."/>
            <person name="Azevedo V."/>
            <person name="Bertero M.G."/>
            <person name="Bessieres P."/>
            <person name="Bolotin A."/>
            <person name="Borchert S."/>
            <person name="Borriss R."/>
            <person name="Boursier L."/>
            <person name="Brans A."/>
            <person name="Braun M."/>
            <person name="Brignell S.C."/>
            <person name="Bron S."/>
            <person name="Brouillet S."/>
            <person name="Bruschi C.V."/>
            <person name="Caldwell B."/>
            <person name="Capuano V."/>
            <person name="Carter N.M."/>
            <person name="Choi S.-K."/>
            <person name="Codani J.-J."/>
            <person name="Connerton I.F."/>
            <person name="Cummings N.J."/>
            <person name="Daniel R.A."/>
            <person name="Denizot F."/>
            <person name="Devine K.M."/>
            <person name="Duesterhoeft A."/>
            <person name="Ehrlich S.D."/>
            <person name="Emmerson P.T."/>
            <person name="Entian K.-D."/>
            <person name="Errington J."/>
            <person name="Fabret C."/>
            <person name="Ferrari E."/>
            <person name="Foulger D."/>
            <person name="Fritz C."/>
            <person name="Fujita M."/>
            <person name="Fujita Y."/>
            <person name="Fuma S."/>
            <person name="Galizzi A."/>
            <person name="Galleron N."/>
            <person name="Ghim S.-Y."/>
            <person name="Glaser P."/>
            <person name="Goffeau A."/>
            <person name="Golightly E.J."/>
            <person name="Grandi G."/>
            <person name="Guiseppi G."/>
            <person name="Guy B.J."/>
            <person name="Haga K."/>
            <person name="Haiech J."/>
            <person name="Harwood C.R."/>
            <person name="Henaut A."/>
            <person name="Hilbert H."/>
            <person name="Holsappel S."/>
            <person name="Hosono S."/>
            <person name="Hullo M.-F."/>
            <person name="Itaya M."/>
            <person name="Jones L.-M."/>
            <person name="Joris B."/>
            <person name="Karamata D."/>
            <person name="Kasahara Y."/>
            <person name="Klaerr-Blanchard M."/>
            <person name="Klein C."/>
            <person name="Kobayashi Y."/>
            <person name="Koetter P."/>
            <person name="Koningstein G."/>
            <person name="Krogh S."/>
            <person name="Kumano M."/>
            <person name="Kurita K."/>
            <person name="Lapidus A."/>
            <person name="Lardinois S."/>
            <person name="Lauber J."/>
            <person name="Lazarevic V."/>
            <person name="Lee S.-M."/>
            <person name="Levine A."/>
            <person name="Liu H."/>
            <person name="Masuda S."/>
            <person name="Mauel C."/>
            <person name="Medigue C."/>
            <person name="Medina N."/>
            <person name="Mellado R.P."/>
            <person name="Mizuno M."/>
            <person name="Moestl D."/>
            <person name="Nakai S."/>
            <person name="Noback M."/>
            <person name="Noone D."/>
            <person name="O'Reilly M."/>
            <person name="Ogawa K."/>
            <person name="Ogiwara A."/>
            <person name="Oudega B."/>
            <person name="Park S.-H."/>
            <person name="Parro V."/>
            <person name="Pohl T.M."/>
            <person name="Portetelle D."/>
            <person name="Porwollik S."/>
            <person name="Prescott A.M."/>
            <person name="Presecan E."/>
            <person name="Pujic P."/>
            <person name="Purnelle B."/>
            <person name="Rapoport G."/>
            <person name="Rey M."/>
            <person name="Reynolds S."/>
            <person name="Rieger M."/>
            <person name="Rivolta C."/>
            <person name="Rocha E."/>
            <person name="Roche B."/>
            <person name="Rose M."/>
            <person name="Sadaie Y."/>
            <person name="Sato T."/>
            <person name="Scanlan E."/>
            <person name="Schleich S."/>
            <person name="Schroeter R."/>
            <person name="Scoffone F."/>
            <person name="Sekiguchi J."/>
            <person name="Sekowska A."/>
            <person name="Seror S.J."/>
            <person name="Serror P."/>
            <person name="Shin B.-S."/>
            <person name="Soldo B."/>
            <person name="Sorokin A."/>
            <person name="Tacconi E."/>
            <person name="Takagi T."/>
            <person name="Takahashi H."/>
            <person name="Takemaru K."/>
            <person name="Takeuchi M."/>
            <person name="Tamakoshi A."/>
            <person name="Tanaka T."/>
            <person name="Terpstra P."/>
            <person name="Tognoni A."/>
            <person name="Tosato V."/>
            <person name="Uchiyama S."/>
            <person name="Vandenbol M."/>
            <person name="Vannier F."/>
            <person name="Vassarotti A."/>
            <person name="Viari A."/>
            <person name="Wambutt R."/>
            <person name="Wedler E."/>
            <person name="Wedler H."/>
            <person name="Weitzenegger T."/>
            <person name="Winters P."/>
            <person name="Wipat A."/>
            <person name="Yamamoto H."/>
            <person name="Yamane K."/>
            <person name="Yasumoto K."/>
            <person name="Yata K."/>
            <person name="Yoshida K."/>
            <person name="Yoshikawa H.-F."/>
            <person name="Zumstein E."/>
            <person name="Yoshikawa H."/>
            <person name="Danchin A."/>
        </authorList>
    </citation>
    <scope>NUCLEOTIDE SEQUENCE [LARGE SCALE GENOMIC DNA]</scope>
    <source>
        <strain>168</strain>
    </source>
</reference>
<reference key="2">
    <citation type="journal article" date="2005" name="Protein Expr. Purif.">
        <title>Open reading frame yjbI of Bacillus subtilis codes for truncated hemoglobin.</title>
        <authorList>
            <person name="Choudhary M.L."/>
            <person name="Jawaid S."/>
            <person name="Ahuja M.K."/>
            <person name="Shiva N.K."/>
            <person name="Gupta P."/>
            <person name="Bhuyan A.K."/>
            <person name="Khatri G.S."/>
        </authorList>
    </citation>
    <scope>CHARACTERIZATION AS A HEME PROTEIN</scope>
    <scope>FUNCTION AS A PEROXIDASE</scope>
    <scope>SUBUNIT</scope>
</reference>
<reference key="3">
    <citation type="journal article" date="2005" name="J. Biol. Chem.">
        <title>The truncated oxygen-avid hemoglobin from Bacillus subtilis: X-ray structure and ligand binding properties.</title>
        <authorList>
            <person name="Giangiacomo L."/>
            <person name="Ilari A."/>
            <person name="Boffi A."/>
            <person name="Morea V."/>
            <person name="Chiancone E."/>
        </authorList>
    </citation>
    <scope>X-RAY CRYSTALLOGRAPHY (2.15 ANGSTROMS) OF COMPLEX WITH HEME</scope>
</reference>
<organism>
    <name type="scientific">Bacillus subtilis (strain 168)</name>
    <dbReference type="NCBI Taxonomy" id="224308"/>
    <lineage>
        <taxon>Bacteria</taxon>
        <taxon>Bacillati</taxon>
        <taxon>Bacillota</taxon>
        <taxon>Bacilli</taxon>
        <taxon>Bacillales</taxon>
        <taxon>Bacillaceae</taxon>
        <taxon>Bacillus</taxon>
    </lineage>
</organism>
<accession>O31607</accession>
<feature type="chain" id="PRO_0000162647" description="Group 2 truncated hemoglobin YjbI">
    <location>
        <begin position="1"/>
        <end position="132"/>
    </location>
</feature>
<feature type="binding site">
    <location>
        <position position="45"/>
    </location>
    <ligand>
        <name>heme</name>
        <dbReference type="ChEBI" id="CHEBI:30413"/>
    </ligand>
</feature>
<feature type="binding site">
    <location>
        <position position="48"/>
    </location>
    <ligand>
        <name>heme</name>
        <dbReference type="ChEBI" id="CHEBI:30413"/>
    </ligand>
</feature>
<feature type="binding site">
    <location>
        <position position="63"/>
    </location>
    <ligand>
        <name>heme</name>
        <dbReference type="ChEBI" id="CHEBI:30413"/>
    </ligand>
</feature>
<feature type="binding site" description="proximal binding residue">
    <location>
        <position position="76"/>
    </location>
    <ligand>
        <name>heme</name>
        <dbReference type="ChEBI" id="CHEBI:30413"/>
    </ligand>
    <ligandPart>
        <name>Fe</name>
        <dbReference type="ChEBI" id="CHEBI:18248"/>
    </ligandPart>
</feature>
<feature type="helix" evidence="3">
    <location>
        <begin position="8"/>
        <end position="11"/>
    </location>
</feature>
<feature type="helix" evidence="3">
    <location>
        <begin position="13"/>
        <end position="30"/>
    </location>
</feature>
<feature type="turn" evidence="3">
    <location>
        <begin position="32"/>
        <end position="34"/>
    </location>
</feature>
<feature type="helix" evidence="3">
    <location>
        <begin position="35"/>
        <end position="37"/>
    </location>
</feature>
<feature type="helix" evidence="3">
    <location>
        <begin position="43"/>
        <end position="56"/>
    </location>
</feature>
<feature type="helix" evidence="3">
    <location>
        <begin position="62"/>
        <end position="67"/>
    </location>
</feature>
<feature type="helix" evidence="3">
    <location>
        <begin position="72"/>
        <end position="76"/>
    </location>
</feature>
<feature type="helix" evidence="3">
    <location>
        <begin position="83"/>
        <end position="100"/>
    </location>
</feature>
<feature type="helix" evidence="3">
    <location>
        <begin position="105"/>
        <end position="121"/>
    </location>
</feature>